<organism>
    <name type="scientific">Cupriavidus pinatubonensis (strain JMP 134 / LMG 1197)</name>
    <name type="common">Cupriavidus necator (strain JMP 134)</name>
    <dbReference type="NCBI Taxonomy" id="264198"/>
    <lineage>
        <taxon>Bacteria</taxon>
        <taxon>Pseudomonadati</taxon>
        <taxon>Pseudomonadota</taxon>
        <taxon>Betaproteobacteria</taxon>
        <taxon>Burkholderiales</taxon>
        <taxon>Burkholderiaceae</taxon>
        <taxon>Cupriavidus</taxon>
    </lineage>
</organism>
<name>HUTI_CUPPJ</name>
<accession>Q46XQ9</accession>
<feature type="chain" id="PRO_0000306495" description="Imidazolonepropionase">
    <location>
        <begin position="1"/>
        <end position="423"/>
    </location>
</feature>
<feature type="binding site" evidence="1">
    <location>
        <position position="80"/>
    </location>
    <ligand>
        <name>Fe(3+)</name>
        <dbReference type="ChEBI" id="CHEBI:29034"/>
    </ligand>
</feature>
<feature type="binding site" evidence="1">
    <location>
        <position position="80"/>
    </location>
    <ligand>
        <name>Zn(2+)</name>
        <dbReference type="ChEBI" id="CHEBI:29105"/>
    </ligand>
</feature>
<feature type="binding site" evidence="1">
    <location>
        <position position="82"/>
    </location>
    <ligand>
        <name>Fe(3+)</name>
        <dbReference type="ChEBI" id="CHEBI:29034"/>
    </ligand>
</feature>
<feature type="binding site" evidence="1">
    <location>
        <position position="82"/>
    </location>
    <ligand>
        <name>Zn(2+)</name>
        <dbReference type="ChEBI" id="CHEBI:29105"/>
    </ligand>
</feature>
<feature type="binding site" evidence="1">
    <location>
        <position position="89"/>
    </location>
    <ligand>
        <name>4-imidazolone-5-propanoate</name>
        <dbReference type="ChEBI" id="CHEBI:77893"/>
    </ligand>
</feature>
<feature type="binding site" evidence="1">
    <location>
        <position position="152"/>
    </location>
    <ligand>
        <name>4-imidazolone-5-propanoate</name>
        <dbReference type="ChEBI" id="CHEBI:77893"/>
    </ligand>
</feature>
<feature type="binding site" evidence="1">
    <location>
        <position position="152"/>
    </location>
    <ligand>
        <name>N-formimidoyl-L-glutamate</name>
        <dbReference type="ChEBI" id="CHEBI:58928"/>
    </ligand>
</feature>
<feature type="binding site" evidence="1">
    <location>
        <position position="185"/>
    </location>
    <ligand>
        <name>4-imidazolone-5-propanoate</name>
        <dbReference type="ChEBI" id="CHEBI:77893"/>
    </ligand>
</feature>
<feature type="binding site" evidence="1">
    <location>
        <position position="250"/>
    </location>
    <ligand>
        <name>Fe(3+)</name>
        <dbReference type="ChEBI" id="CHEBI:29034"/>
    </ligand>
</feature>
<feature type="binding site" evidence="1">
    <location>
        <position position="250"/>
    </location>
    <ligand>
        <name>Zn(2+)</name>
        <dbReference type="ChEBI" id="CHEBI:29105"/>
    </ligand>
</feature>
<feature type="binding site" evidence="1">
    <location>
        <position position="253"/>
    </location>
    <ligand>
        <name>4-imidazolone-5-propanoate</name>
        <dbReference type="ChEBI" id="CHEBI:77893"/>
    </ligand>
</feature>
<feature type="binding site" evidence="1">
    <location>
        <position position="325"/>
    </location>
    <ligand>
        <name>Fe(3+)</name>
        <dbReference type="ChEBI" id="CHEBI:29034"/>
    </ligand>
</feature>
<feature type="binding site" evidence="1">
    <location>
        <position position="325"/>
    </location>
    <ligand>
        <name>Zn(2+)</name>
        <dbReference type="ChEBI" id="CHEBI:29105"/>
    </ligand>
</feature>
<feature type="binding site" evidence="1">
    <location>
        <position position="327"/>
    </location>
    <ligand>
        <name>N-formimidoyl-L-glutamate</name>
        <dbReference type="ChEBI" id="CHEBI:58928"/>
    </ligand>
</feature>
<feature type="binding site" evidence="1">
    <location>
        <position position="329"/>
    </location>
    <ligand>
        <name>N-formimidoyl-L-glutamate</name>
        <dbReference type="ChEBI" id="CHEBI:58928"/>
    </ligand>
</feature>
<feature type="binding site" evidence="1">
    <location>
        <position position="330"/>
    </location>
    <ligand>
        <name>4-imidazolone-5-propanoate</name>
        <dbReference type="ChEBI" id="CHEBI:77893"/>
    </ligand>
</feature>
<keyword id="KW-0963">Cytoplasm</keyword>
<keyword id="KW-0369">Histidine metabolism</keyword>
<keyword id="KW-0378">Hydrolase</keyword>
<keyword id="KW-0408">Iron</keyword>
<keyword id="KW-0479">Metal-binding</keyword>
<keyword id="KW-0862">Zinc</keyword>
<reference key="1">
    <citation type="journal article" date="2010" name="PLoS ONE">
        <title>The complete multipartite genome sequence of Cupriavidus necator JMP134, a versatile pollutant degrader.</title>
        <authorList>
            <person name="Lykidis A."/>
            <person name="Perez-Pantoja D."/>
            <person name="Ledger T."/>
            <person name="Mavromatis K."/>
            <person name="Anderson I.J."/>
            <person name="Ivanova N.N."/>
            <person name="Hooper S.D."/>
            <person name="Lapidus A."/>
            <person name="Lucas S."/>
            <person name="Gonzalez B."/>
            <person name="Kyrpides N.C."/>
        </authorList>
    </citation>
    <scope>NUCLEOTIDE SEQUENCE [LARGE SCALE GENOMIC DNA]</scope>
    <source>
        <strain>JMP134 / LMG 1197</strain>
    </source>
</reference>
<protein>
    <recommendedName>
        <fullName evidence="1">Imidazolonepropionase</fullName>
        <ecNumber evidence="1">3.5.2.7</ecNumber>
    </recommendedName>
    <alternativeName>
        <fullName evidence="1">Imidazolone-5-propionate hydrolase</fullName>
    </alternativeName>
</protein>
<gene>
    <name evidence="1" type="primary">hutI</name>
    <name type="ordered locus">Reut_A2713</name>
</gene>
<dbReference type="EC" id="3.5.2.7" evidence="1"/>
<dbReference type="EMBL" id="CP000090">
    <property type="protein sequence ID" value="AAZ62074.1"/>
    <property type="molecule type" value="Genomic_DNA"/>
</dbReference>
<dbReference type="SMR" id="Q46XQ9"/>
<dbReference type="STRING" id="264198.Reut_A2713"/>
<dbReference type="KEGG" id="reu:Reut_A2713"/>
<dbReference type="eggNOG" id="COG1228">
    <property type="taxonomic scope" value="Bacteria"/>
</dbReference>
<dbReference type="HOGENOM" id="CLU_041647_0_0_4"/>
<dbReference type="OrthoDB" id="9776455at2"/>
<dbReference type="UniPathway" id="UPA00379">
    <property type="reaction ID" value="UER00551"/>
</dbReference>
<dbReference type="GO" id="GO:0005737">
    <property type="term" value="C:cytoplasm"/>
    <property type="evidence" value="ECO:0007669"/>
    <property type="project" value="UniProtKB-SubCell"/>
</dbReference>
<dbReference type="GO" id="GO:0050480">
    <property type="term" value="F:imidazolonepropionase activity"/>
    <property type="evidence" value="ECO:0007669"/>
    <property type="project" value="UniProtKB-UniRule"/>
</dbReference>
<dbReference type="GO" id="GO:0005506">
    <property type="term" value="F:iron ion binding"/>
    <property type="evidence" value="ECO:0007669"/>
    <property type="project" value="UniProtKB-UniRule"/>
</dbReference>
<dbReference type="GO" id="GO:0008270">
    <property type="term" value="F:zinc ion binding"/>
    <property type="evidence" value="ECO:0007669"/>
    <property type="project" value="UniProtKB-UniRule"/>
</dbReference>
<dbReference type="GO" id="GO:0019556">
    <property type="term" value="P:L-histidine catabolic process to glutamate and formamide"/>
    <property type="evidence" value="ECO:0007669"/>
    <property type="project" value="UniProtKB-UniPathway"/>
</dbReference>
<dbReference type="GO" id="GO:0019557">
    <property type="term" value="P:L-histidine catabolic process to glutamate and formate"/>
    <property type="evidence" value="ECO:0007669"/>
    <property type="project" value="UniProtKB-UniPathway"/>
</dbReference>
<dbReference type="CDD" id="cd01296">
    <property type="entry name" value="Imidazolone-5PH"/>
    <property type="match status" value="1"/>
</dbReference>
<dbReference type="FunFam" id="3.20.20.140:FF:000007">
    <property type="entry name" value="Imidazolonepropionase"/>
    <property type="match status" value="1"/>
</dbReference>
<dbReference type="Gene3D" id="3.20.20.140">
    <property type="entry name" value="Metal-dependent hydrolases"/>
    <property type="match status" value="1"/>
</dbReference>
<dbReference type="Gene3D" id="2.30.40.10">
    <property type="entry name" value="Urease, subunit C, domain 1"/>
    <property type="match status" value="1"/>
</dbReference>
<dbReference type="HAMAP" id="MF_00372">
    <property type="entry name" value="HutI"/>
    <property type="match status" value="1"/>
</dbReference>
<dbReference type="InterPro" id="IPR006680">
    <property type="entry name" value="Amidohydro-rel"/>
</dbReference>
<dbReference type="InterPro" id="IPR005920">
    <property type="entry name" value="HutI"/>
</dbReference>
<dbReference type="InterPro" id="IPR011059">
    <property type="entry name" value="Metal-dep_hydrolase_composite"/>
</dbReference>
<dbReference type="InterPro" id="IPR032466">
    <property type="entry name" value="Metal_Hydrolase"/>
</dbReference>
<dbReference type="NCBIfam" id="TIGR01224">
    <property type="entry name" value="hutI"/>
    <property type="match status" value="1"/>
</dbReference>
<dbReference type="PANTHER" id="PTHR42752">
    <property type="entry name" value="IMIDAZOLONEPROPIONASE"/>
    <property type="match status" value="1"/>
</dbReference>
<dbReference type="PANTHER" id="PTHR42752:SF1">
    <property type="entry name" value="IMIDAZOLONEPROPIONASE-RELATED"/>
    <property type="match status" value="1"/>
</dbReference>
<dbReference type="Pfam" id="PF01979">
    <property type="entry name" value="Amidohydro_1"/>
    <property type="match status" value="1"/>
</dbReference>
<dbReference type="SUPFAM" id="SSF51338">
    <property type="entry name" value="Composite domain of metallo-dependent hydrolases"/>
    <property type="match status" value="1"/>
</dbReference>
<dbReference type="SUPFAM" id="SSF51556">
    <property type="entry name" value="Metallo-dependent hydrolases"/>
    <property type="match status" value="1"/>
</dbReference>
<sequence length="423" mass="44964">MNAPLASGRPDIQSADGIWHCCHLLPDADPDRAVRDAALVVEQGRIAWLGAEAELPADYRSLPRHDAGGTWMTPGLVDCHTHLVYGGQRADEFAMRLAGASYEEIARAGGGIVSSVRATRAADEDTLFSQAAARLAPLLAEGVTAIEIKSGYGLELEAERRQLRVARRLGEAFGVSVHTTFLGAHALPPEYAGRADDYIDLVCNTMLPALAEEGLVDAVDAFCESVGFSLAQTERVFEAAARHGLRVKLHAEQLSNLGGAALAARHHALSADHLEHLDEAGVEAMAAAGTVAVLLPGAYYFLRDTNLPPIALLRKHGVPIAISTDHNPGTSPVTSLLLMMNMACTLFRLTVPEALAGVTTHAARALGAPDRHGKLAVGRAADFVLWRVESPAELAYWFGRNPAAVVVRQGRIHPATSQHGGRA</sequence>
<comment type="function">
    <text evidence="1">Catalyzes the hydrolytic cleavage of the carbon-nitrogen bond in imidazolone-5-propanoate to yield N-formimidoyl-L-glutamate. It is the third step in the universal histidine degradation pathway.</text>
</comment>
<comment type="catalytic activity">
    <reaction evidence="1">
        <text>4-imidazolone-5-propanoate + H2O = N-formimidoyl-L-glutamate</text>
        <dbReference type="Rhea" id="RHEA:23660"/>
        <dbReference type="ChEBI" id="CHEBI:15377"/>
        <dbReference type="ChEBI" id="CHEBI:58928"/>
        <dbReference type="ChEBI" id="CHEBI:77893"/>
        <dbReference type="EC" id="3.5.2.7"/>
    </reaction>
</comment>
<comment type="cofactor">
    <cofactor evidence="1">
        <name>Zn(2+)</name>
        <dbReference type="ChEBI" id="CHEBI:29105"/>
    </cofactor>
    <cofactor evidence="1">
        <name>Fe(3+)</name>
        <dbReference type="ChEBI" id="CHEBI:29034"/>
    </cofactor>
    <text evidence="1">Binds 1 zinc or iron ion per subunit.</text>
</comment>
<comment type="pathway">
    <text evidence="1">Amino-acid degradation; L-histidine degradation into L-glutamate; N-formimidoyl-L-glutamate from L-histidine: step 3/3.</text>
</comment>
<comment type="subcellular location">
    <subcellularLocation>
        <location evidence="1">Cytoplasm</location>
    </subcellularLocation>
</comment>
<comment type="similarity">
    <text evidence="1">Belongs to the metallo-dependent hydrolases superfamily. HutI family.</text>
</comment>
<proteinExistence type="inferred from homology"/>
<evidence type="ECO:0000255" key="1">
    <source>
        <dbReference type="HAMAP-Rule" id="MF_00372"/>
    </source>
</evidence>